<gene>
    <name type="primary">ygjJ</name>
    <name type="ordered locus">b3079</name>
    <name type="ordered locus">JW3050</name>
</gene>
<sequence>MKLITAPCRALLALPFCYAFSAAGEEARPAEHDDTKTPAITSTSSPSFRFYGELGVGGYMDLEGENKHKYSDGTYIEGGLEMKYGSWFGLIYGEGWTVQADHDGNAWVPDHSWGGFEGGINRFYGGYRTNDGTEIMLSLRQDSSLDDLQWWGDFTPDLGYVIPNTRDIMTALKVQNLSGNFRYSVTATPAGHHDESKAWLHFGKYDRYDDKYTYPAMMNGYIQYDLAEGITWMNGLEITDGTGQLYLTGLLTPNFAARAWHHTGRADGLDVPGSESGMMVSAMYEALKGVYLSTAYTYAKHRPDHADDETTSFMQFGIWYEYGGGRFATAFDSRFYMKNASHDPSDQIFLMQYFYW</sequence>
<protein>
    <recommendedName>
        <fullName>Uncharacterized protein YgjJ</fullName>
    </recommendedName>
</protein>
<dbReference type="EMBL" id="U18997">
    <property type="protein sequence ID" value="AAA57880.1"/>
    <property type="molecule type" value="Genomic_DNA"/>
</dbReference>
<dbReference type="EMBL" id="U00096">
    <property type="protein sequence ID" value="AAC76114.1"/>
    <property type="molecule type" value="Genomic_DNA"/>
</dbReference>
<dbReference type="EMBL" id="AP009048">
    <property type="protein sequence ID" value="BAE77129.1"/>
    <property type="molecule type" value="Genomic_DNA"/>
</dbReference>
<dbReference type="PIR" id="D65096">
    <property type="entry name" value="D65096"/>
</dbReference>
<dbReference type="RefSeq" id="NP_417550.1">
    <property type="nucleotide sequence ID" value="NC_000913.3"/>
</dbReference>
<dbReference type="RefSeq" id="WP_000767652.1">
    <property type="nucleotide sequence ID" value="NZ_LN832404.1"/>
</dbReference>
<dbReference type="BioGRID" id="4259265">
    <property type="interactions" value="163"/>
</dbReference>
<dbReference type="FunCoup" id="P42591">
    <property type="interactions" value="403"/>
</dbReference>
<dbReference type="STRING" id="511145.b3079"/>
<dbReference type="PaxDb" id="511145-b3079"/>
<dbReference type="EnsemblBacteria" id="AAC76114">
    <property type="protein sequence ID" value="AAC76114"/>
    <property type="gene ID" value="b3079"/>
</dbReference>
<dbReference type="GeneID" id="75205113"/>
<dbReference type="GeneID" id="947597"/>
<dbReference type="KEGG" id="ecj:JW3050"/>
<dbReference type="KEGG" id="eco:b3079"/>
<dbReference type="KEGG" id="ecoc:C3026_16815"/>
<dbReference type="PATRIC" id="fig|511145.12.peg.3173"/>
<dbReference type="EchoBASE" id="EB2580"/>
<dbReference type="eggNOG" id="ENOG502Z7VJ">
    <property type="taxonomic scope" value="Bacteria"/>
</dbReference>
<dbReference type="HOGENOM" id="CLU_936089_0_0_6"/>
<dbReference type="InParanoid" id="P42591"/>
<dbReference type="OMA" id="RDIMYAL"/>
<dbReference type="OrthoDB" id="6501528at2"/>
<dbReference type="BioCyc" id="EcoCyc:G7598-MONOMER"/>
<dbReference type="PRO" id="PR:P42591"/>
<dbReference type="Proteomes" id="UP000000625">
    <property type="component" value="Chromosome"/>
</dbReference>
<dbReference type="InterPro" id="IPR048107">
    <property type="entry name" value="YgjJ-like"/>
</dbReference>
<dbReference type="NCBIfam" id="NF041442">
    <property type="entry name" value="YgjJ"/>
    <property type="match status" value="1"/>
</dbReference>
<accession>P42591</accession>
<accession>Q2M9C7</accession>
<proteinExistence type="inferred from homology"/>
<keyword id="KW-1185">Reference proteome</keyword>
<keyword id="KW-0732">Signal</keyword>
<evidence type="ECO:0000255" key="1"/>
<feature type="signal peptide" evidence="1">
    <location>
        <begin position="1"/>
        <end position="21"/>
    </location>
</feature>
<feature type="chain" id="PRO_0000013905" description="Uncharacterized protein YgjJ">
    <location>
        <begin position="22"/>
        <end position="356"/>
    </location>
</feature>
<reference key="1">
    <citation type="journal article" date="1997" name="Science">
        <title>The complete genome sequence of Escherichia coli K-12.</title>
        <authorList>
            <person name="Blattner F.R."/>
            <person name="Plunkett G. III"/>
            <person name="Bloch C.A."/>
            <person name="Perna N.T."/>
            <person name="Burland V."/>
            <person name="Riley M."/>
            <person name="Collado-Vides J."/>
            <person name="Glasner J.D."/>
            <person name="Rode C.K."/>
            <person name="Mayhew G.F."/>
            <person name="Gregor J."/>
            <person name="Davis N.W."/>
            <person name="Kirkpatrick H.A."/>
            <person name="Goeden M.A."/>
            <person name="Rose D.J."/>
            <person name="Mau B."/>
            <person name="Shao Y."/>
        </authorList>
    </citation>
    <scope>NUCLEOTIDE SEQUENCE [LARGE SCALE GENOMIC DNA]</scope>
    <source>
        <strain>K12 / MG1655 / ATCC 47076</strain>
    </source>
</reference>
<reference key="2">
    <citation type="journal article" date="2006" name="Mol. Syst. Biol.">
        <title>Highly accurate genome sequences of Escherichia coli K-12 strains MG1655 and W3110.</title>
        <authorList>
            <person name="Hayashi K."/>
            <person name="Morooka N."/>
            <person name="Yamamoto Y."/>
            <person name="Fujita K."/>
            <person name="Isono K."/>
            <person name="Choi S."/>
            <person name="Ohtsubo E."/>
            <person name="Baba T."/>
            <person name="Wanner B.L."/>
            <person name="Mori H."/>
            <person name="Horiuchi T."/>
        </authorList>
    </citation>
    <scope>NUCLEOTIDE SEQUENCE [LARGE SCALE GENOMIC DNA]</scope>
    <source>
        <strain>K12 / W3110 / ATCC 27325 / DSM 5911</strain>
    </source>
</reference>
<name>YGJJ_ECOLI</name>
<organism>
    <name type="scientific">Escherichia coli (strain K12)</name>
    <dbReference type="NCBI Taxonomy" id="83333"/>
    <lineage>
        <taxon>Bacteria</taxon>
        <taxon>Pseudomonadati</taxon>
        <taxon>Pseudomonadota</taxon>
        <taxon>Gammaproteobacteria</taxon>
        <taxon>Enterobacterales</taxon>
        <taxon>Enterobacteriaceae</taxon>
        <taxon>Escherichia</taxon>
    </lineage>
</organism>